<organism>
    <name type="scientific">Marinobacter nauticus (strain ATCC 700491 / DSM 11845 / VT8)</name>
    <name type="common">Marinobacter aquaeolei</name>
    <dbReference type="NCBI Taxonomy" id="351348"/>
    <lineage>
        <taxon>Bacteria</taxon>
        <taxon>Pseudomonadati</taxon>
        <taxon>Pseudomonadota</taxon>
        <taxon>Gammaproteobacteria</taxon>
        <taxon>Pseudomonadales</taxon>
        <taxon>Marinobacteraceae</taxon>
        <taxon>Marinobacter</taxon>
    </lineage>
</organism>
<comment type="subcellular location">
    <subcellularLocation>
        <location>Cytoplasm</location>
    </subcellularLocation>
    <subcellularLocation>
        <location evidence="1">Cell inner membrane</location>
        <topology evidence="1">Peripheral membrane protein</topology>
        <orientation evidence="1">Cytoplasmic side</orientation>
    </subcellularLocation>
</comment>
<comment type="similarity">
    <text evidence="1">Belongs to the HflD family.</text>
</comment>
<sequence length="206" mass="22995">MSRSLHDQTLALAGLCQAATLVQQIAHNGNCNEDSLETCIRSLFATNPASTLDVYGGELSDIREGLTVLSTVLAQHGQPQDVEILRYMFNLIQLEAKLKRSPDMLDVIGNRIEQARHTASHFGYSHSNLLGNLASIYADTISTFRLRIQVTGNPQILQRNENADKVRALLLAGIRSAVLWRQSGGHRWQLIFTRKKVISHARELLR</sequence>
<protein>
    <recommendedName>
        <fullName evidence="1">High frequency lysogenization protein HflD homolog</fullName>
    </recommendedName>
</protein>
<evidence type="ECO:0000255" key="1">
    <source>
        <dbReference type="HAMAP-Rule" id="MF_00695"/>
    </source>
</evidence>
<gene>
    <name evidence="1" type="primary">hflD</name>
    <name type="ordered locus">Maqu_1763</name>
</gene>
<keyword id="KW-0997">Cell inner membrane</keyword>
<keyword id="KW-1003">Cell membrane</keyword>
<keyword id="KW-0963">Cytoplasm</keyword>
<keyword id="KW-0472">Membrane</keyword>
<reference key="1">
    <citation type="journal article" date="2011" name="Appl. Environ. Microbiol.">
        <title>Genomic potential of Marinobacter aquaeolei, a biogeochemical 'opportunitroph'.</title>
        <authorList>
            <person name="Singer E."/>
            <person name="Webb E.A."/>
            <person name="Nelson W.C."/>
            <person name="Heidelberg J.F."/>
            <person name="Ivanova N."/>
            <person name="Pati A."/>
            <person name="Edwards K.J."/>
        </authorList>
    </citation>
    <scope>NUCLEOTIDE SEQUENCE [LARGE SCALE GENOMIC DNA]</scope>
    <source>
        <strain>ATCC 700491 / DSM 11845 / VT8</strain>
    </source>
</reference>
<proteinExistence type="inferred from homology"/>
<accession>A1U1H6</accession>
<name>HFLD_MARN8</name>
<feature type="chain" id="PRO_1000045425" description="High frequency lysogenization protein HflD homolog">
    <location>
        <begin position="1"/>
        <end position="206"/>
    </location>
</feature>
<dbReference type="EMBL" id="CP000514">
    <property type="protein sequence ID" value="ABM18845.1"/>
    <property type="molecule type" value="Genomic_DNA"/>
</dbReference>
<dbReference type="RefSeq" id="WP_011785243.1">
    <property type="nucleotide sequence ID" value="NC_008740.1"/>
</dbReference>
<dbReference type="SMR" id="A1U1H6"/>
<dbReference type="STRING" id="351348.Maqu_1763"/>
<dbReference type="KEGG" id="maq:Maqu_1763"/>
<dbReference type="eggNOG" id="COG2915">
    <property type="taxonomic scope" value="Bacteria"/>
</dbReference>
<dbReference type="HOGENOM" id="CLU_098920_0_0_6"/>
<dbReference type="OrthoDB" id="9788031at2"/>
<dbReference type="Proteomes" id="UP000000998">
    <property type="component" value="Chromosome"/>
</dbReference>
<dbReference type="GO" id="GO:0005737">
    <property type="term" value="C:cytoplasm"/>
    <property type="evidence" value="ECO:0007669"/>
    <property type="project" value="UniProtKB-SubCell"/>
</dbReference>
<dbReference type="GO" id="GO:0005886">
    <property type="term" value="C:plasma membrane"/>
    <property type="evidence" value="ECO:0007669"/>
    <property type="project" value="UniProtKB-SubCell"/>
</dbReference>
<dbReference type="Gene3D" id="1.10.3890.10">
    <property type="entry name" value="HflD-like"/>
    <property type="match status" value="1"/>
</dbReference>
<dbReference type="HAMAP" id="MF_00695">
    <property type="entry name" value="HflD_protein"/>
    <property type="match status" value="1"/>
</dbReference>
<dbReference type="InterPro" id="IPR007451">
    <property type="entry name" value="HflD"/>
</dbReference>
<dbReference type="InterPro" id="IPR035932">
    <property type="entry name" value="HflD-like_sf"/>
</dbReference>
<dbReference type="NCBIfam" id="NF001246">
    <property type="entry name" value="PRK00218.1-2"/>
    <property type="match status" value="1"/>
</dbReference>
<dbReference type="NCBIfam" id="NF001248">
    <property type="entry name" value="PRK00218.1-4"/>
    <property type="match status" value="1"/>
</dbReference>
<dbReference type="PANTHER" id="PTHR38100">
    <property type="entry name" value="HIGH FREQUENCY LYSOGENIZATION PROTEIN HFLD"/>
    <property type="match status" value="1"/>
</dbReference>
<dbReference type="PANTHER" id="PTHR38100:SF1">
    <property type="entry name" value="HIGH FREQUENCY LYSOGENIZATION PROTEIN HFLD"/>
    <property type="match status" value="1"/>
</dbReference>
<dbReference type="Pfam" id="PF04356">
    <property type="entry name" value="DUF489"/>
    <property type="match status" value="1"/>
</dbReference>
<dbReference type="SUPFAM" id="SSF101322">
    <property type="entry name" value="YcfC-like"/>
    <property type="match status" value="1"/>
</dbReference>